<sequence>MTAPSQVLKIRRPDDWHVHLRDGDMLKTVVPYTSEIYGRAIVMPNLASPITTVDAAIAYRQRILDAVPAGHDFTPLMTCYLTDSLDADELERGFHEGVFTAAKLYPANATTNSSHGVTSVDAIMPVLERMEKLGIPLLVHGEVTHADVDIFDREARFIDTVMEPLRQRLTALKVVFEHITTKDAAQYVRDGNDYLAATITPQHLMFNRNDMLVGGIRPHLYCLPILKRNIHQQALRELVASGFTRAFLGTDSAPHSRHRKETSCGCAGCFNAPSALGSYAAVFEEMNALAHFEAFCSLNGPQFYGLPMNTGWVELVRDEQQIPGNIALADDSLVPFLAGETVRWSVKK</sequence>
<organism>
    <name type="scientific">Salmonella typhimurium (strain LT2 / SGSC1412 / ATCC 700720)</name>
    <dbReference type="NCBI Taxonomy" id="99287"/>
    <lineage>
        <taxon>Bacteria</taxon>
        <taxon>Pseudomonadati</taxon>
        <taxon>Pseudomonadota</taxon>
        <taxon>Gammaproteobacteria</taxon>
        <taxon>Enterobacterales</taxon>
        <taxon>Enterobacteriaceae</taxon>
        <taxon>Salmonella</taxon>
    </lineage>
</organism>
<keyword id="KW-0002">3D-structure</keyword>
<keyword id="KW-0378">Hydrolase</keyword>
<keyword id="KW-0479">Metal-binding</keyword>
<keyword id="KW-0665">Pyrimidine biosynthesis</keyword>
<keyword id="KW-1185">Reference proteome</keyword>
<keyword id="KW-0862">Zinc</keyword>
<gene>
    <name evidence="2 4" type="primary">pyrC</name>
    <name type="ordered locus">STM1163</name>
</gene>
<reference key="1">
    <citation type="journal article" date="1986" name="Eur. J. Biochem.">
        <title>Cloning and structural characterization of the Salmonella typhimurium pyrC gene encoding dihydroorotase.</title>
        <authorList>
            <person name="Neuhrd J."/>
            <person name="Kelln R.A."/>
            <person name="Stauning E."/>
        </authorList>
    </citation>
    <scope>NUCLEOTIDE SEQUENCE [GENOMIC DNA]</scope>
    <source>
        <strain>LT2</strain>
    </source>
</reference>
<reference key="2">
    <citation type="journal article" date="2001" name="Nature">
        <title>Complete genome sequence of Salmonella enterica serovar Typhimurium LT2.</title>
        <authorList>
            <person name="McClelland M."/>
            <person name="Sanderson K.E."/>
            <person name="Spieth J."/>
            <person name="Clifton S.W."/>
            <person name="Latreille P."/>
            <person name="Courtney L."/>
            <person name="Porwollik S."/>
            <person name="Ali J."/>
            <person name="Dante M."/>
            <person name="Du F."/>
            <person name="Hou S."/>
            <person name="Layman D."/>
            <person name="Leonard S."/>
            <person name="Nguyen C."/>
            <person name="Scott K."/>
            <person name="Holmes A."/>
            <person name="Grewal N."/>
            <person name="Mulvaney E."/>
            <person name="Ryan E."/>
            <person name="Sun H."/>
            <person name="Florea L."/>
            <person name="Miller W."/>
            <person name="Stoneking T."/>
            <person name="Nhan M."/>
            <person name="Waterston R."/>
            <person name="Wilson R.K."/>
        </authorList>
    </citation>
    <scope>NUCLEOTIDE SEQUENCE [LARGE SCALE GENOMIC DNA]</scope>
    <source>
        <strain>LT2 / SGSC1412 / ATCC 700720</strain>
    </source>
</reference>
<reference evidence="6" key="3">
    <citation type="submission" date="2009-09" db="PDB data bank">
        <title>1.8 angstrom resolution crystal structure of dihydroorotase (pyrC) from Salmonella enterica subsp. enterica serovar typhimurium str. LT2.</title>
        <authorList>
            <person name="Minasov G."/>
            <person name="Halavaty A."/>
            <person name="Shuvalova L."/>
            <person name="Dubrovska I."/>
            <person name="Winsor J."/>
            <person name="Papazisi L."/>
            <person name="Anderson W.F."/>
        </authorList>
    </citation>
    <scope>X-RAY CRYSTALLOGRAPHY (1.80 ANGSTROMS) IN COMPLEX WITH ZINC</scope>
    <scope>COFACTOR</scope>
    <source>
        <strain>LT2</strain>
    </source>
</reference>
<proteinExistence type="evidence at protein level"/>
<name>PYRC_SALTY</name>
<comment type="function">
    <text evidence="2">Catalyzes the reversible cyclization of carbamoyl aspartate to dihydroorotate.</text>
</comment>
<comment type="catalytic activity">
    <reaction evidence="2">
        <text>(S)-dihydroorotate + H2O = N-carbamoyl-L-aspartate + H(+)</text>
        <dbReference type="Rhea" id="RHEA:24296"/>
        <dbReference type="ChEBI" id="CHEBI:15377"/>
        <dbReference type="ChEBI" id="CHEBI:15378"/>
        <dbReference type="ChEBI" id="CHEBI:30864"/>
        <dbReference type="ChEBI" id="CHEBI:32814"/>
        <dbReference type="EC" id="3.5.2.3"/>
    </reaction>
</comment>
<comment type="cofactor">
    <cofactor evidence="2 3">
        <name>Zn(2+)</name>
        <dbReference type="ChEBI" id="CHEBI:29105"/>
    </cofactor>
    <text evidence="2 3">Binds 2 Zn(2+) ions per subunit.</text>
</comment>
<comment type="pathway">
    <text evidence="2">Pyrimidine metabolism; UMP biosynthesis via de novo pathway; (S)-dihydroorotate from bicarbonate: step 3/3.</text>
</comment>
<comment type="subunit">
    <text evidence="2">Homodimer.</text>
</comment>
<comment type="similarity">
    <text evidence="2 5">Belongs to the metallo-dependent hydrolases superfamily. DHOase family. Class II DHOase subfamily.</text>
</comment>
<dbReference type="EC" id="3.5.2.3" evidence="2"/>
<dbReference type="EMBL" id="X03928">
    <property type="protein sequence ID" value="CAA27567.1"/>
    <property type="molecule type" value="Genomic_DNA"/>
</dbReference>
<dbReference type="EMBL" id="AE006468">
    <property type="protein sequence ID" value="AAL20093.1"/>
    <property type="molecule type" value="Genomic_DNA"/>
</dbReference>
<dbReference type="PIR" id="A27143">
    <property type="entry name" value="DEEBOT"/>
</dbReference>
<dbReference type="RefSeq" id="NP_460134.1">
    <property type="nucleotide sequence ID" value="NC_003197.2"/>
</dbReference>
<dbReference type="RefSeq" id="WP_000126580.1">
    <property type="nucleotide sequence ID" value="NC_003197.2"/>
</dbReference>
<dbReference type="PDB" id="3JZE">
    <property type="method" value="X-ray"/>
    <property type="resolution" value="1.80 A"/>
    <property type="chains" value="A/B/C/D=1-348"/>
</dbReference>
<dbReference type="PDBsum" id="3JZE"/>
<dbReference type="SMR" id="P06204"/>
<dbReference type="STRING" id="99287.STM1163"/>
<dbReference type="PaxDb" id="99287-STM1163"/>
<dbReference type="GeneID" id="1252681"/>
<dbReference type="KEGG" id="stm:STM1163"/>
<dbReference type="PATRIC" id="fig|99287.12.peg.1231"/>
<dbReference type="HOGENOM" id="CLU_041558_1_0_6"/>
<dbReference type="OMA" id="TLHHISM"/>
<dbReference type="PhylomeDB" id="P06204"/>
<dbReference type="BioCyc" id="SENT99287:STM1163-MONOMER"/>
<dbReference type="UniPathway" id="UPA00070">
    <property type="reaction ID" value="UER00117"/>
</dbReference>
<dbReference type="EvolutionaryTrace" id="P06204"/>
<dbReference type="Proteomes" id="UP000001014">
    <property type="component" value="Chromosome"/>
</dbReference>
<dbReference type="GO" id="GO:0005737">
    <property type="term" value="C:cytoplasm"/>
    <property type="evidence" value="ECO:0000318"/>
    <property type="project" value="GO_Central"/>
</dbReference>
<dbReference type="GO" id="GO:0005829">
    <property type="term" value="C:cytosol"/>
    <property type="evidence" value="ECO:0000318"/>
    <property type="project" value="GO_Central"/>
</dbReference>
<dbReference type="GO" id="GO:0004151">
    <property type="term" value="F:dihydroorotase activity"/>
    <property type="evidence" value="ECO:0000318"/>
    <property type="project" value="GO_Central"/>
</dbReference>
<dbReference type="GO" id="GO:0008270">
    <property type="term" value="F:zinc ion binding"/>
    <property type="evidence" value="ECO:0007669"/>
    <property type="project" value="UniProtKB-UniRule"/>
</dbReference>
<dbReference type="GO" id="GO:0006207">
    <property type="term" value="P:'de novo' pyrimidine nucleobase biosynthetic process"/>
    <property type="evidence" value="ECO:0000318"/>
    <property type="project" value="GO_Central"/>
</dbReference>
<dbReference type="GO" id="GO:0044205">
    <property type="term" value="P:'de novo' UMP biosynthetic process"/>
    <property type="evidence" value="ECO:0007669"/>
    <property type="project" value="UniProtKB-UniRule"/>
</dbReference>
<dbReference type="GO" id="GO:0006221">
    <property type="term" value="P:pyrimidine nucleotide biosynthetic process"/>
    <property type="evidence" value="ECO:0000318"/>
    <property type="project" value="GO_Central"/>
</dbReference>
<dbReference type="CDD" id="cd01294">
    <property type="entry name" value="DHOase"/>
    <property type="match status" value="1"/>
</dbReference>
<dbReference type="FunFam" id="3.20.20.140:FF:000006">
    <property type="entry name" value="Dihydroorotase"/>
    <property type="match status" value="1"/>
</dbReference>
<dbReference type="Gene3D" id="3.20.20.140">
    <property type="entry name" value="Metal-dependent hydrolases"/>
    <property type="match status" value="1"/>
</dbReference>
<dbReference type="HAMAP" id="MF_00219">
    <property type="entry name" value="PyrC_classII"/>
    <property type="match status" value="1"/>
</dbReference>
<dbReference type="InterPro" id="IPR006680">
    <property type="entry name" value="Amidohydro-rel"/>
</dbReference>
<dbReference type="InterPro" id="IPR004721">
    <property type="entry name" value="DHOdimr"/>
</dbReference>
<dbReference type="InterPro" id="IPR002195">
    <property type="entry name" value="Dihydroorotase_CS"/>
</dbReference>
<dbReference type="InterPro" id="IPR032466">
    <property type="entry name" value="Metal_Hydrolase"/>
</dbReference>
<dbReference type="NCBIfam" id="TIGR00856">
    <property type="entry name" value="pyrC_dimer"/>
    <property type="match status" value="1"/>
</dbReference>
<dbReference type="PANTHER" id="PTHR43137">
    <property type="entry name" value="DIHYDROOROTASE"/>
    <property type="match status" value="1"/>
</dbReference>
<dbReference type="PANTHER" id="PTHR43137:SF1">
    <property type="entry name" value="DIHYDROOROTASE"/>
    <property type="match status" value="1"/>
</dbReference>
<dbReference type="Pfam" id="PF01979">
    <property type="entry name" value="Amidohydro_1"/>
    <property type="match status" value="1"/>
</dbReference>
<dbReference type="PIRSF" id="PIRSF001237">
    <property type="entry name" value="DHOdimr"/>
    <property type="match status" value="1"/>
</dbReference>
<dbReference type="SUPFAM" id="SSF51556">
    <property type="entry name" value="Metallo-dependent hydrolases"/>
    <property type="match status" value="1"/>
</dbReference>
<dbReference type="PROSITE" id="PS00482">
    <property type="entry name" value="DIHYDROOROTASE_1"/>
    <property type="match status" value="1"/>
</dbReference>
<dbReference type="PROSITE" id="PS00483">
    <property type="entry name" value="DIHYDROOROTASE_2"/>
    <property type="match status" value="1"/>
</dbReference>
<protein>
    <recommendedName>
        <fullName evidence="2">Dihydroorotase</fullName>
        <shortName evidence="2">DHOase</shortName>
        <ecNumber evidence="2">3.5.2.3</ecNumber>
    </recommendedName>
</protein>
<accession>P06204</accession>
<feature type="initiator methionine" description="Removed" evidence="1">
    <location>
        <position position="1"/>
    </location>
</feature>
<feature type="chain" id="PRO_0000147218" description="Dihydroorotase">
    <location>
        <begin position="2"/>
        <end position="348"/>
    </location>
</feature>
<feature type="active site" evidence="2">
    <location>
        <position position="251"/>
    </location>
</feature>
<feature type="binding site" evidence="2 3 6">
    <location>
        <position position="17"/>
    </location>
    <ligand>
        <name>Zn(2+)</name>
        <dbReference type="ChEBI" id="CHEBI:29105"/>
        <label>1</label>
    </ligand>
</feature>
<feature type="binding site" evidence="2">
    <location>
        <begin position="19"/>
        <end position="21"/>
    </location>
    <ligand>
        <name>substrate</name>
    </ligand>
</feature>
<feature type="binding site" evidence="2 3 6">
    <location>
        <position position="19"/>
    </location>
    <ligand>
        <name>Zn(2+)</name>
        <dbReference type="ChEBI" id="CHEBI:29105"/>
        <label>1</label>
    </ligand>
</feature>
<feature type="binding site" evidence="2">
    <location>
        <position position="45"/>
    </location>
    <ligand>
        <name>substrate</name>
    </ligand>
</feature>
<feature type="binding site" description="via carbamate group" evidence="2 3 6">
    <location>
        <position position="103"/>
    </location>
    <ligand>
        <name>Zn(2+)</name>
        <dbReference type="ChEBI" id="CHEBI:29105"/>
        <label>1</label>
    </ligand>
</feature>
<feature type="binding site" description="via carbamate group" evidence="2 3 6">
    <location>
        <position position="103"/>
    </location>
    <ligand>
        <name>Zn(2+)</name>
        <dbReference type="ChEBI" id="CHEBI:29105"/>
        <label>2</label>
    </ligand>
</feature>
<feature type="binding site" evidence="2">
    <location>
        <position position="140"/>
    </location>
    <ligand>
        <name>substrate</name>
    </ligand>
</feature>
<feature type="binding site" evidence="2 3 6">
    <location>
        <position position="140"/>
    </location>
    <ligand>
        <name>Zn(2+)</name>
        <dbReference type="ChEBI" id="CHEBI:29105"/>
        <label>2</label>
    </ligand>
</feature>
<feature type="binding site" evidence="2 3 6">
    <location>
        <position position="178"/>
    </location>
    <ligand>
        <name>Zn(2+)</name>
        <dbReference type="ChEBI" id="CHEBI:29105"/>
        <label>2</label>
    </ligand>
</feature>
<feature type="binding site" evidence="2">
    <location>
        <position position="223"/>
    </location>
    <ligand>
        <name>substrate</name>
    </ligand>
</feature>
<feature type="binding site" evidence="2 3 6">
    <location>
        <position position="251"/>
    </location>
    <ligand>
        <name>Zn(2+)</name>
        <dbReference type="ChEBI" id="CHEBI:29105"/>
        <label>1</label>
    </ligand>
</feature>
<feature type="binding site" evidence="2">
    <location>
        <position position="255"/>
    </location>
    <ligand>
        <name>substrate</name>
    </ligand>
</feature>
<feature type="binding site" evidence="2">
    <location>
        <position position="267"/>
    </location>
    <ligand>
        <name>substrate</name>
    </ligand>
</feature>
<feature type="modified residue" description="N6-carboxylysine" evidence="2">
    <location>
        <position position="103"/>
    </location>
</feature>
<feature type="sequence conflict" description="In Ref. 1; CAA27567." evidence="5" ref="1">
    <original>V</original>
    <variation>G</variation>
    <location>
        <position position="67"/>
    </location>
</feature>
<feature type="strand" evidence="7">
    <location>
        <begin position="7"/>
        <end position="11"/>
    </location>
</feature>
<feature type="strand" evidence="7">
    <location>
        <begin position="15"/>
        <end position="18"/>
    </location>
</feature>
<feature type="helix" evidence="7">
    <location>
        <begin position="23"/>
        <end position="34"/>
    </location>
</feature>
<feature type="strand" evidence="7">
    <location>
        <begin position="38"/>
        <end position="42"/>
    </location>
</feature>
<feature type="strand" evidence="7">
    <location>
        <begin position="46"/>
        <end position="48"/>
    </location>
</feature>
<feature type="helix" evidence="7">
    <location>
        <begin position="53"/>
        <end position="65"/>
    </location>
</feature>
<feature type="strand" evidence="7">
    <location>
        <begin position="74"/>
        <end position="80"/>
    </location>
</feature>
<feature type="helix" evidence="7">
    <location>
        <begin position="87"/>
        <end position="95"/>
    </location>
</feature>
<feature type="strand" evidence="7">
    <location>
        <begin position="99"/>
        <end position="104"/>
    </location>
</feature>
<feature type="strand" evidence="7">
    <location>
        <begin position="116"/>
        <end position="118"/>
    </location>
</feature>
<feature type="helix" evidence="7">
    <location>
        <begin position="121"/>
        <end position="123"/>
    </location>
</feature>
<feature type="helix" evidence="7">
    <location>
        <begin position="124"/>
        <end position="133"/>
    </location>
</feature>
<feature type="strand" evidence="7">
    <location>
        <begin position="137"/>
        <end position="139"/>
    </location>
</feature>
<feature type="helix" evidence="7">
    <location>
        <begin position="150"/>
        <end position="152"/>
    </location>
</feature>
<feature type="helix" evidence="7">
    <location>
        <begin position="153"/>
        <end position="160"/>
    </location>
</feature>
<feature type="helix" evidence="7">
    <location>
        <begin position="162"/>
        <end position="168"/>
    </location>
</feature>
<feature type="strand" evidence="7">
    <location>
        <begin position="174"/>
        <end position="176"/>
    </location>
</feature>
<feature type="helix" evidence="7">
    <location>
        <begin position="182"/>
        <end position="189"/>
    </location>
</feature>
<feature type="strand" evidence="7">
    <location>
        <begin position="195"/>
        <end position="199"/>
    </location>
</feature>
<feature type="helix" evidence="7">
    <location>
        <begin position="201"/>
        <end position="205"/>
    </location>
</feature>
<feature type="helix" evidence="7">
    <location>
        <begin position="208"/>
        <end position="212"/>
    </location>
</feature>
<feature type="helix" evidence="7">
    <location>
        <begin position="218"/>
        <end position="220"/>
    </location>
</feature>
<feature type="helix" evidence="7">
    <location>
        <begin position="229"/>
        <end position="240"/>
    </location>
</feature>
<feature type="strand" evidence="7">
    <location>
        <begin position="246"/>
        <end position="248"/>
    </location>
</feature>
<feature type="helix" evidence="7">
    <location>
        <begin position="257"/>
        <end position="260"/>
    </location>
</feature>
<feature type="strand" evidence="7">
    <location>
        <begin position="261"/>
        <end position="265"/>
    </location>
</feature>
<feature type="turn" evidence="7">
    <location>
        <begin position="272"/>
        <end position="274"/>
    </location>
</feature>
<feature type="helix" evidence="7">
    <location>
        <begin position="275"/>
        <end position="285"/>
    </location>
</feature>
<feature type="helix" evidence="7">
    <location>
        <begin position="289"/>
        <end position="291"/>
    </location>
</feature>
<feature type="helix" evidence="7">
    <location>
        <begin position="292"/>
        <end position="297"/>
    </location>
</feature>
<feature type="helix" evidence="7">
    <location>
        <begin position="299"/>
        <end position="304"/>
    </location>
</feature>
<feature type="strand" evidence="7">
    <location>
        <begin position="311"/>
        <end position="316"/>
    </location>
</feature>
<feature type="strand" evidence="7">
    <location>
        <begin position="329"/>
        <end position="333"/>
    </location>
</feature>
<feature type="turn" evidence="7">
    <location>
        <begin position="336"/>
        <end position="339"/>
    </location>
</feature>
<feature type="strand" evidence="7">
    <location>
        <begin position="341"/>
        <end position="343"/>
    </location>
</feature>
<evidence type="ECO:0000250" key="1"/>
<evidence type="ECO:0000255" key="2">
    <source>
        <dbReference type="HAMAP-Rule" id="MF_00219"/>
    </source>
</evidence>
<evidence type="ECO:0000269" key="3">
    <source ref="3"/>
</evidence>
<evidence type="ECO:0000303" key="4">
    <source>
    </source>
</evidence>
<evidence type="ECO:0000305" key="5"/>
<evidence type="ECO:0007744" key="6">
    <source>
        <dbReference type="PDB" id="3JZE"/>
    </source>
</evidence>
<evidence type="ECO:0007829" key="7">
    <source>
        <dbReference type="PDB" id="3JZE"/>
    </source>
</evidence>